<evidence type="ECO:0000255" key="1">
    <source>
        <dbReference type="HAMAP-Rule" id="MF_00102"/>
    </source>
</evidence>
<evidence type="ECO:0000305" key="2"/>
<proteinExistence type="inferred from homology"/>
<reference key="1">
    <citation type="journal article" date="2003" name="Proc. Natl. Acad. Sci. U.S.A.">
        <title>The genome sequence of Blochmannia floridanus: comparative analysis of reduced genomes.</title>
        <authorList>
            <person name="Gil R."/>
            <person name="Silva F.J."/>
            <person name="Zientz E."/>
            <person name="Delmotte F."/>
            <person name="Gonzalez-Candelas F."/>
            <person name="Latorre A."/>
            <person name="Rausell C."/>
            <person name="Kamerbeek J."/>
            <person name="Gadau J."/>
            <person name="Hoelldobler B."/>
            <person name="van Ham R.C.H.J."/>
            <person name="Gross R."/>
            <person name="Moya A."/>
        </authorList>
    </citation>
    <scope>NUCLEOTIDE SEQUENCE [LARGE SCALE GENOMIC DNA]</scope>
</reference>
<feature type="chain" id="PRO_0000141424" description="4-hydroxy-tetrahydrodipicolinate reductase">
    <location>
        <begin position="1"/>
        <end position="274"/>
    </location>
</feature>
<feature type="active site" description="Proton donor/acceptor" evidence="1">
    <location>
        <position position="160"/>
    </location>
</feature>
<feature type="active site" description="Proton donor" evidence="1">
    <location>
        <position position="164"/>
    </location>
</feature>
<feature type="binding site" evidence="1">
    <location>
        <begin position="7"/>
        <end position="12"/>
    </location>
    <ligand>
        <name>NAD(+)</name>
        <dbReference type="ChEBI" id="CHEBI:57540"/>
    </ligand>
</feature>
<feature type="binding site" evidence="1">
    <location>
        <position position="40"/>
    </location>
    <ligand>
        <name>NADP(+)</name>
        <dbReference type="ChEBI" id="CHEBI:58349"/>
    </ligand>
</feature>
<feature type="binding site" evidence="1">
    <location>
        <begin position="103"/>
        <end position="105"/>
    </location>
    <ligand>
        <name>NAD(+)</name>
        <dbReference type="ChEBI" id="CHEBI:57540"/>
    </ligand>
</feature>
<feature type="binding site" evidence="1">
    <location>
        <begin position="127"/>
        <end position="130"/>
    </location>
    <ligand>
        <name>NAD(+)</name>
        <dbReference type="ChEBI" id="CHEBI:57540"/>
    </ligand>
</feature>
<feature type="binding site" evidence="1">
    <location>
        <position position="161"/>
    </location>
    <ligand>
        <name>(S)-2,3,4,5-tetrahydrodipicolinate</name>
        <dbReference type="ChEBI" id="CHEBI:16845"/>
    </ligand>
</feature>
<feature type="binding site" evidence="1">
    <location>
        <begin position="170"/>
        <end position="171"/>
    </location>
    <ligand>
        <name>(S)-2,3,4,5-tetrahydrodipicolinate</name>
        <dbReference type="ChEBI" id="CHEBI:16845"/>
    </ligand>
</feature>
<keyword id="KW-0028">Amino-acid biosynthesis</keyword>
<keyword id="KW-0963">Cytoplasm</keyword>
<keyword id="KW-0220">Diaminopimelate biosynthesis</keyword>
<keyword id="KW-0457">Lysine biosynthesis</keyword>
<keyword id="KW-0520">NAD</keyword>
<keyword id="KW-0521">NADP</keyword>
<keyword id="KW-0560">Oxidoreductase</keyword>
<keyword id="KW-1185">Reference proteome</keyword>
<gene>
    <name evidence="1" type="primary">dapB</name>
    <name type="ordered locus">Bfl121</name>
</gene>
<protein>
    <recommendedName>
        <fullName evidence="1">4-hydroxy-tetrahydrodipicolinate reductase</fullName>
        <shortName evidence="1">HTPA reductase</shortName>
        <ecNumber evidence="1">1.17.1.8</ecNumber>
    </recommendedName>
</protein>
<sequence>MRLAVTGVTGRMGKSIIQRIIQTQAHQVDNKFILGAAIARDRSDICGIDAGTFVQSSKVGVFITDNIELVKGDFDVLIDFTAPESTMNYVNFCVMNNKNMVIGTTGLSKSYLSVIERASSKIGIVYSANFSVGITIMLKLLNSVSKISRYFVNIDIVESHHNKKKDIPSGTALLIRNVVEYNQFSDCVCNEDLVSNGEKKYGKLDNDIKIHSIRAGDIVGEHSVLCTSIGERLEIKHQAFNRIIFVDGALRSAVWLGCAKIGLFDLNNVLKINM</sequence>
<accession>Q7VQK8</accession>
<dbReference type="EC" id="1.17.1.8" evidence="1"/>
<dbReference type="EMBL" id="BX248583">
    <property type="protein sequence ID" value="CAD83642.1"/>
    <property type="molecule type" value="Genomic_DNA"/>
</dbReference>
<dbReference type="SMR" id="Q7VQK8"/>
<dbReference type="STRING" id="203907.Bfl121"/>
<dbReference type="KEGG" id="bfl:Bfl121"/>
<dbReference type="eggNOG" id="COG0289">
    <property type="taxonomic scope" value="Bacteria"/>
</dbReference>
<dbReference type="HOGENOM" id="CLU_047479_2_1_6"/>
<dbReference type="OrthoDB" id="9790352at2"/>
<dbReference type="UniPathway" id="UPA00034">
    <property type="reaction ID" value="UER00018"/>
</dbReference>
<dbReference type="Proteomes" id="UP000002192">
    <property type="component" value="Chromosome"/>
</dbReference>
<dbReference type="GO" id="GO:0005829">
    <property type="term" value="C:cytosol"/>
    <property type="evidence" value="ECO:0007669"/>
    <property type="project" value="TreeGrafter"/>
</dbReference>
<dbReference type="GO" id="GO:0008839">
    <property type="term" value="F:4-hydroxy-tetrahydrodipicolinate reductase"/>
    <property type="evidence" value="ECO:0007669"/>
    <property type="project" value="UniProtKB-EC"/>
</dbReference>
<dbReference type="GO" id="GO:0051287">
    <property type="term" value="F:NAD binding"/>
    <property type="evidence" value="ECO:0007669"/>
    <property type="project" value="UniProtKB-UniRule"/>
</dbReference>
<dbReference type="GO" id="GO:0050661">
    <property type="term" value="F:NADP binding"/>
    <property type="evidence" value="ECO:0007669"/>
    <property type="project" value="UniProtKB-UniRule"/>
</dbReference>
<dbReference type="GO" id="GO:0016726">
    <property type="term" value="F:oxidoreductase activity, acting on CH or CH2 groups, NAD or NADP as acceptor"/>
    <property type="evidence" value="ECO:0007669"/>
    <property type="project" value="UniProtKB-UniRule"/>
</dbReference>
<dbReference type="GO" id="GO:0019877">
    <property type="term" value="P:diaminopimelate biosynthetic process"/>
    <property type="evidence" value="ECO:0007669"/>
    <property type="project" value="UniProtKB-UniRule"/>
</dbReference>
<dbReference type="GO" id="GO:0009089">
    <property type="term" value="P:lysine biosynthetic process via diaminopimelate"/>
    <property type="evidence" value="ECO:0007669"/>
    <property type="project" value="UniProtKB-UniRule"/>
</dbReference>
<dbReference type="CDD" id="cd02274">
    <property type="entry name" value="DHDPR_N"/>
    <property type="match status" value="1"/>
</dbReference>
<dbReference type="FunFam" id="3.30.360.10:FF:000009">
    <property type="entry name" value="4-hydroxy-tetrahydrodipicolinate reductase"/>
    <property type="match status" value="1"/>
</dbReference>
<dbReference type="Gene3D" id="3.30.360.10">
    <property type="entry name" value="Dihydrodipicolinate Reductase, domain 2"/>
    <property type="match status" value="1"/>
</dbReference>
<dbReference type="Gene3D" id="3.40.50.720">
    <property type="entry name" value="NAD(P)-binding Rossmann-like Domain"/>
    <property type="match status" value="1"/>
</dbReference>
<dbReference type="HAMAP" id="MF_00102">
    <property type="entry name" value="DapB"/>
    <property type="match status" value="1"/>
</dbReference>
<dbReference type="InterPro" id="IPR022663">
    <property type="entry name" value="DapB_C"/>
</dbReference>
<dbReference type="InterPro" id="IPR000846">
    <property type="entry name" value="DapB_N"/>
</dbReference>
<dbReference type="InterPro" id="IPR022664">
    <property type="entry name" value="DapB_N_CS"/>
</dbReference>
<dbReference type="InterPro" id="IPR023940">
    <property type="entry name" value="DHDPR_bac"/>
</dbReference>
<dbReference type="InterPro" id="IPR036291">
    <property type="entry name" value="NAD(P)-bd_dom_sf"/>
</dbReference>
<dbReference type="NCBIfam" id="TIGR00036">
    <property type="entry name" value="dapB"/>
    <property type="match status" value="1"/>
</dbReference>
<dbReference type="PANTHER" id="PTHR20836:SF0">
    <property type="entry name" value="4-HYDROXY-TETRAHYDRODIPICOLINATE REDUCTASE 1, CHLOROPLASTIC-RELATED"/>
    <property type="match status" value="1"/>
</dbReference>
<dbReference type="PANTHER" id="PTHR20836">
    <property type="entry name" value="DIHYDRODIPICOLINATE REDUCTASE"/>
    <property type="match status" value="1"/>
</dbReference>
<dbReference type="Pfam" id="PF05173">
    <property type="entry name" value="DapB_C"/>
    <property type="match status" value="1"/>
</dbReference>
<dbReference type="Pfam" id="PF01113">
    <property type="entry name" value="DapB_N"/>
    <property type="match status" value="1"/>
</dbReference>
<dbReference type="PIRSF" id="PIRSF000161">
    <property type="entry name" value="DHPR"/>
    <property type="match status" value="1"/>
</dbReference>
<dbReference type="SUPFAM" id="SSF55347">
    <property type="entry name" value="Glyceraldehyde-3-phosphate dehydrogenase-like, C-terminal domain"/>
    <property type="match status" value="1"/>
</dbReference>
<dbReference type="SUPFAM" id="SSF51735">
    <property type="entry name" value="NAD(P)-binding Rossmann-fold domains"/>
    <property type="match status" value="1"/>
</dbReference>
<dbReference type="PROSITE" id="PS01298">
    <property type="entry name" value="DAPB"/>
    <property type="match status" value="1"/>
</dbReference>
<name>DAPB_BLOFL</name>
<comment type="function">
    <text evidence="1">Catalyzes the conversion of 4-hydroxy-tetrahydrodipicolinate (HTPA) to tetrahydrodipicolinate.</text>
</comment>
<comment type="catalytic activity">
    <reaction evidence="1">
        <text>(S)-2,3,4,5-tetrahydrodipicolinate + NAD(+) + H2O = (2S,4S)-4-hydroxy-2,3,4,5-tetrahydrodipicolinate + NADH + H(+)</text>
        <dbReference type="Rhea" id="RHEA:35323"/>
        <dbReference type="ChEBI" id="CHEBI:15377"/>
        <dbReference type="ChEBI" id="CHEBI:15378"/>
        <dbReference type="ChEBI" id="CHEBI:16845"/>
        <dbReference type="ChEBI" id="CHEBI:57540"/>
        <dbReference type="ChEBI" id="CHEBI:57945"/>
        <dbReference type="ChEBI" id="CHEBI:67139"/>
        <dbReference type="EC" id="1.17.1.8"/>
    </reaction>
</comment>
<comment type="catalytic activity">
    <reaction evidence="1">
        <text>(S)-2,3,4,5-tetrahydrodipicolinate + NADP(+) + H2O = (2S,4S)-4-hydroxy-2,3,4,5-tetrahydrodipicolinate + NADPH + H(+)</text>
        <dbReference type="Rhea" id="RHEA:35331"/>
        <dbReference type="ChEBI" id="CHEBI:15377"/>
        <dbReference type="ChEBI" id="CHEBI:15378"/>
        <dbReference type="ChEBI" id="CHEBI:16845"/>
        <dbReference type="ChEBI" id="CHEBI:57783"/>
        <dbReference type="ChEBI" id="CHEBI:58349"/>
        <dbReference type="ChEBI" id="CHEBI:67139"/>
        <dbReference type="EC" id="1.17.1.8"/>
    </reaction>
</comment>
<comment type="pathway">
    <text evidence="1">Amino-acid biosynthesis; L-lysine biosynthesis via DAP pathway; (S)-tetrahydrodipicolinate from L-aspartate: step 4/4.</text>
</comment>
<comment type="subunit">
    <text evidence="1">Homotetramer.</text>
</comment>
<comment type="subcellular location">
    <subcellularLocation>
        <location evidence="1">Cytoplasm</location>
    </subcellularLocation>
</comment>
<comment type="similarity">
    <text evidence="1">Belongs to the DapB family.</text>
</comment>
<comment type="caution">
    <text evidence="2">Was originally thought to be a dihydrodipicolinate reductase (DHDPR), catalyzing the conversion of dihydrodipicolinate to tetrahydrodipicolinate. However, it was shown in E.coli that the substrate of the enzymatic reaction is not dihydrodipicolinate (DHDP) but in fact (2S,4S)-4-hydroxy-2,3,4,5-tetrahydrodipicolinic acid (HTPA), the product released by the DapA-catalyzed reaction.</text>
</comment>
<organism>
    <name type="scientific">Blochmanniella floridana</name>
    <dbReference type="NCBI Taxonomy" id="203907"/>
    <lineage>
        <taxon>Bacteria</taxon>
        <taxon>Pseudomonadati</taxon>
        <taxon>Pseudomonadota</taxon>
        <taxon>Gammaproteobacteria</taxon>
        <taxon>Enterobacterales</taxon>
        <taxon>Enterobacteriaceae</taxon>
        <taxon>ant endosymbionts</taxon>
        <taxon>Candidatus Blochmanniella</taxon>
    </lineage>
</organism>